<gene>
    <name type="primary">Frmpd4</name>
    <name type="synonym">Gm196</name>
    <name type="synonym">Kiaa0316</name>
    <name type="synonym">Pdzd10</name>
    <name type="synonym">Pdzk10</name>
</gene>
<feature type="chain" id="PRO_0000307133" description="FERM and PDZ domain-containing protein 4">
    <location>
        <begin position="1"/>
        <end position="1320"/>
    </location>
</feature>
<feature type="domain" description="WW" evidence="4">
    <location>
        <begin position="33"/>
        <end position="66"/>
    </location>
</feature>
<feature type="domain" description="PDZ" evidence="3">
    <location>
        <begin position="78"/>
        <end position="155"/>
    </location>
</feature>
<feature type="domain" description="FERM" evidence="2">
    <location>
        <begin position="204"/>
        <end position="519"/>
    </location>
</feature>
<feature type="region of interest" description="Disordered" evidence="5">
    <location>
        <begin position="809"/>
        <end position="847"/>
    </location>
</feature>
<feature type="region of interest" description="Disordered" evidence="5">
    <location>
        <begin position="897"/>
        <end position="927"/>
    </location>
</feature>
<feature type="region of interest" description="Disordered" evidence="5">
    <location>
        <begin position="949"/>
        <end position="981"/>
    </location>
</feature>
<feature type="region of interest" description="Disordered" evidence="5">
    <location>
        <begin position="1024"/>
        <end position="1050"/>
    </location>
</feature>
<feature type="region of interest" description="Disordered" evidence="5">
    <location>
        <begin position="1114"/>
        <end position="1139"/>
    </location>
</feature>
<feature type="region of interest" description="Disordered" evidence="5">
    <location>
        <begin position="1204"/>
        <end position="1274"/>
    </location>
</feature>
<feature type="compositionally biased region" description="Low complexity" evidence="5">
    <location>
        <begin position="900"/>
        <end position="913"/>
    </location>
</feature>
<feature type="compositionally biased region" description="Polar residues" evidence="5">
    <location>
        <begin position="1204"/>
        <end position="1217"/>
    </location>
</feature>
<feature type="compositionally biased region" description="Low complexity" evidence="5">
    <location>
        <begin position="1223"/>
        <end position="1232"/>
    </location>
</feature>
<feature type="splice variant" id="VSP_028581" description="In isoform 2." evidence="8">
    <location>
        <begin position="1"/>
        <end position="40"/>
    </location>
</feature>
<feature type="splice variant" id="VSP_028582" description="In isoform 3." evidence="7 8">
    <original>MDVFSFVKIPKLSS</original>
    <variation>MRSHSC</variation>
    <location>
        <begin position="1"/>
        <end position="14"/>
    </location>
</feature>
<organism>
    <name type="scientific">Mus musculus</name>
    <name type="common">Mouse</name>
    <dbReference type="NCBI Taxonomy" id="10090"/>
    <lineage>
        <taxon>Eukaryota</taxon>
        <taxon>Metazoa</taxon>
        <taxon>Chordata</taxon>
        <taxon>Craniata</taxon>
        <taxon>Vertebrata</taxon>
        <taxon>Euteleostomi</taxon>
        <taxon>Mammalia</taxon>
        <taxon>Eutheria</taxon>
        <taxon>Euarchontoglires</taxon>
        <taxon>Glires</taxon>
        <taxon>Rodentia</taxon>
        <taxon>Myomorpha</taxon>
        <taxon>Muroidea</taxon>
        <taxon>Muridae</taxon>
        <taxon>Murinae</taxon>
        <taxon>Mus</taxon>
        <taxon>Mus</taxon>
    </lineage>
</organism>
<proteinExistence type="evidence at protein level"/>
<name>FRPD4_MOUSE</name>
<evidence type="ECO:0000250" key="1">
    <source>
        <dbReference type="UniProtKB" id="Q14CM0"/>
    </source>
</evidence>
<evidence type="ECO:0000255" key="2">
    <source>
        <dbReference type="PROSITE-ProRule" id="PRU00084"/>
    </source>
</evidence>
<evidence type="ECO:0000255" key="3">
    <source>
        <dbReference type="PROSITE-ProRule" id="PRU00143"/>
    </source>
</evidence>
<evidence type="ECO:0000255" key="4">
    <source>
        <dbReference type="PROSITE-ProRule" id="PRU00224"/>
    </source>
</evidence>
<evidence type="ECO:0000256" key="5">
    <source>
        <dbReference type="SAM" id="MobiDB-lite"/>
    </source>
</evidence>
<evidence type="ECO:0000269" key="6">
    <source>
    </source>
</evidence>
<evidence type="ECO:0000303" key="7">
    <source>
    </source>
</evidence>
<evidence type="ECO:0000303" key="8">
    <source>
    </source>
</evidence>
<evidence type="ECO:0000305" key="9"/>
<comment type="function">
    <text evidence="1">Positive regulator of dendritic spine morphogenesis and density. Required for the maintenance of excitatory synaptic transmission. Binds phosphatidylinositol 4,5-bisphosphate.</text>
</comment>
<comment type="subunit">
    <text evidence="1">Interacts (via C-terminus) with DLG1, DLG2, DLG3 and DLG4/PSD95. Interacts (via N-terminus) with ARHGEF7; the interaction is mediated by the PDZ domain. Interacts with GPSM2 (via TPR repeat region).</text>
</comment>
<comment type="subcellular location">
    <subcellularLocation>
        <location evidence="1">Cell projection</location>
        <location evidence="1">Dendritic spine</location>
    </subcellularLocation>
</comment>
<comment type="alternative products">
    <event type="alternative splicing"/>
    <isoform>
        <id>A2AFR3-1</id>
        <name>1</name>
        <sequence type="displayed"/>
    </isoform>
    <isoform>
        <id>A2AFR3-2</id>
        <name>2</name>
        <sequence type="described" ref="VSP_028581"/>
    </isoform>
    <isoform>
        <id>A2AFR3-3</id>
        <name>3</name>
        <sequence type="described" ref="VSP_028582"/>
    </isoform>
</comment>
<comment type="tissue specificity">
    <text evidence="6">Expressed in various regions of the brain, including cortex, hippocampus, cerebellum, olfactory bulb and medial habenular nucleus.</text>
</comment>
<comment type="domain">
    <text evidence="1">The FERM domain mediates the interaction with phosphatidylinositol 4,5-bisphosphate.</text>
</comment>
<comment type="sequence caution" evidence="9">
    <conflict type="erroneous translation">
        <sequence resource="EMBL-CDS" id="BAC65526"/>
    </conflict>
    <text>Wrong choice of CDS.</text>
</comment>
<protein>
    <recommendedName>
        <fullName>FERM and PDZ domain-containing protein 4</fullName>
    </recommendedName>
    <alternativeName>
        <fullName>PDZ domain-containing protein 10</fullName>
    </alternativeName>
    <alternativeName>
        <fullName>PSD-95-interacting regulator of spine morphogenesis</fullName>
        <shortName>Preso</shortName>
    </alternativeName>
</protein>
<accession>A2AFR3</accession>
<accession>B9EIG4</accession>
<accession>Q3UHE4</accession>
<accession>Q3UHI9</accession>
<accession>Q80U41</accession>
<dbReference type="EMBL" id="AK147370">
    <property type="protein sequence ID" value="BAE27868.1"/>
    <property type="molecule type" value="mRNA"/>
</dbReference>
<dbReference type="EMBL" id="AK147440">
    <property type="protein sequence ID" value="BAE27913.1"/>
    <property type="molecule type" value="mRNA"/>
</dbReference>
<dbReference type="EMBL" id="AL672186">
    <property type="status" value="NOT_ANNOTATED_CDS"/>
    <property type="molecule type" value="Genomic_DNA"/>
</dbReference>
<dbReference type="EMBL" id="AL807744">
    <property type="status" value="NOT_ANNOTATED_CDS"/>
    <property type="molecule type" value="Genomic_DNA"/>
</dbReference>
<dbReference type="EMBL" id="AL807773">
    <property type="status" value="NOT_ANNOTATED_CDS"/>
    <property type="molecule type" value="Genomic_DNA"/>
</dbReference>
<dbReference type="EMBL" id="BX546498">
    <property type="status" value="NOT_ANNOTATED_CDS"/>
    <property type="molecule type" value="Genomic_DNA"/>
</dbReference>
<dbReference type="EMBL" id="BC139429">
    <property type="protein sequence ID" value="AAI39430.1"/>
    <property type="molecule type" value="mRNA"/>
</dbReference>
<dbReference type="EMBL" id="AK122244">
    <property type="protein sequence ID" value="BAC65526.1"/>
    <property type="status" value="ALT_SEQ"/>
    <property type="molecule type" value="Transcribed_RNA"/>
</dbReference>
<dbReference type="CCDS" id="CCDS41210.1">
    <molecule id="A2AFR3-3"/>
</dbReference>
<dbReference type="CCDS" id="CCDS72470.1">
    <molecule id="A2AFR3-2"/>
</dbReference>
<dbReference type="RefSeq" id="NP_001028502.1">
    <molecule id="A2AFR3-3"/>
    <property type="nucleotide sequence ID" value="NM_001033330.4"/>
</dbReference>
<dbReference type="RefSeq" id="NP_001277356.1">
    <molecule id="A2AFR3-3"/>
    <property type="nucleotide sequence ID" value="NM_001290427.2"/>
</dbReference>
<dbReference type="RefSeq" id="NP_001277357.1">
    <molecule id="A2AFR3-2"/>
    <property type="nucleotide sequence ID" value="NM_001290428.1"/>
</dbReference>
<dbReference type="SMR" id="A2AFR3"/>
<dbReference type="BioGRID" id="237173">
    <property type="interactions" value="1"/>
</dbReference>
<dbReference type="FunCoup" id="A2AFR3">
    <property type="interactions" value="107"/>
</dbReference>
<dbReference type="IntAct" id="A2AFR3">
    <property type="interactions" value="1"/>
</dbReference>
<dbReference type="STRING" id="10090.ENSMUSP00000107773"/>
<dbReference type="GlyGen" id="A2AFR3">
    <property type="glycosylation" value="1 site"/>
</dbReference>
<dbReference type="iPTMnet" id="A2AFR3"/>
<dbReference type="PhosphoSitePlus" id="A2AFR3"/>
<dbReference type="PaxDb" id="10090-ENSMUSP00000107777"/>
<dbReference type="PeptideAtlas" id="A2AFR3"/>
<dbReference type="ProteomicsDB" id="266862">
    <molecule id="A2AFR3-1"/>
</dbReference>
<dbReference type="ProteomicsDB" id="266863">
    <molecule id="A2AFR3-2"/>
</dbReference>
<dbReference type="ProteomicsDB" id="266864">
    <molecule id="A2AFR3-3"/>
</dbReference>
<dbReference type="Antibodypedia" id="49701">
    <property type="antibodies" value="39 antibodies from 18 providers"/>
</dbReference>
<dbReference type="Ensembl" id="ENSMUST00000112145.3">
    <molecule id="A2AFR3-3"/>
    <property type="protein sequence ID" value="ENSMUSP00000107773.3"/>
    <property type="gene ID" value="ENSMUSG00000049176.17"/>
</dbReference>
<dbReference type="Ensembl" id="ENSMUST00000112149.9">
    <molecule id="A2AFR3-1"/>
    <property type="protein sequence ID" value="ENSMUSP00000107777.2"/>
    <property type="gene ID" value="ENSMUSG00000049176.17"/>
</dbReference>
<dbReference type="Ensembl" id="ENSMUST00000238211.2">
    <molecule id="A2AFR3-2"/>
    <property type="protein sequence ID" value="ENSMUSP00000158917.2"/>
    <property type="gene ID" value="ENSMUSG00000049176.17"/>
</dbReference>
<dbReference type="Ensembl" id="ENSMUST00000239138.2">
    <molecule id="A2AFR3-3"/>
    <property type="protein sequence ID" value="ENSMUSP00000159190.2"/>
    <property type="gene ID" value="ENSMUSG00000049176.17"/>
</dbReference>
<dbReference type="GeneID" id="333605"/>
<dbReference type="KEGG" id="mmu:333605"/>
<dbReference type="UCSC" id="uc009uxf.2">
    <molecule id="A2AFR3-1"/>
    <property type="organism name" value="mouse"/>
</dbReference>
<dbReference type="UCSC" id="uc009uxg.2">
    <molecule id="A2AFR3-3"/>
    <property type="organism name" value="mouse"/>
</dbReference>
<dbReference type="AGR" id="MGI:3042378"/>
<dbReference type="CTD" id="9758"/>
<dbReference type="MGI" id="MGI:3042378">
    <property type="gene designation" value="Frmpd4"/>
</dbReference>
<dbReference type="VEuPathDB" id="HostDB:ENSMUSG00000049176"/>
<dbReference type="eggNOG" id="KOG3552">
    <property type="taxonomic scope" value="Eukaryota"/>
</dbReference>
<dbReference type="GeneTree" id="ENSGT00950000183035"/>
<dbReference type="HOGENOM" id="CLU_002690_0_0_1"/>
<dbReference type="InParanoid" id="A2AFR3"/>
<dbReference type="OrthoDB" id="5859304at2759"/>
<dbReference type="PhylomeDB" id="A2AFR3"/>
<dbReference type="TreeFam" id="TF316497"/>
<dbReference type="BioGRID-ORCS" id="333605">
    <property type="hits" value="1 hit in 75 CRISPR screens"/>
</dbReference>
<dbReference type="ChiTaRS" id="Frmpd4">
    <property type="organism name" value="mouse"/>
</dbReference>
<dbReference type="PRO" id="PR:A2AFR3"/>
<dbReference type="Proteomes" id="UP000000589">
    <property type="component" value="Chromosome X"/>
</dbReference>
<dbReference type="RNAct" id="A2AFR3">
    <property type="molecule type" value="protein"/>
</dbReference>
<dbReference type="Bgee" id="ENSMUSG00000049176">
    <property type="expression patterns" value="Expressed in dentate gyrus of hippocampal formation granule cell and 33 other cell types or tissues"/>
</dbReference>
<dbReference type="ExpressionAtlas" id="A2AFR3">
    <property type="expression patterns" value="baseline and differential"/>
</dbReference>
<dbReference type="GO" id="GO:0005856">
    <property type="term" value="C:cytoskeleton"/>
    <property type="evidence" value="ECO:0007669"/>
    <property type="project" value="InterPro"/>
</dbReference>
<dbReference type="GO" id="GO:0043197">
    <property type="term" value="C:dendritic spine"/>
    <property type="evidence" value="ECO:0000250"/>
    <property type="project" value="UniProtKB"/>
</dbReference>
<dbReference type="GO" id="GO:0098978">
    <property type="term" value="C:glutamatergic synapse"/>
    <property type="evidence" value="ECO:0000314"/>
    <property type="project" value="SynGO"/>
</dbReference>
<dbReference type="GO" id="GO:0014069">
    <property type="term" value="C:postsynaptic density"/>
    <property type="evidence" value="ECO:0000314"/>
    <property type="project" value="SynGO"/>
</dbReference>
<dbReference type="GO" id="GO:0008289">
    <property type="term" value="F:lipid binding"/>
    <property type="evidence" value="ECO:0007669"/>
    <property type="project" value="UniProtKB-KW"/>
</dbReference>
<dbReference type="GO" id="GO:0051835">
    <property type="term" value="P:positive regulation of synapse structural plasticity"/>
    <property type="evidence" value="ECO:0000250"/>
    <property type="project" value="UniProtKB"/>
</dbReference>
<dbReference type="CDD" id="cd14473">
    <property type="entry name" value="FERM_B-lobe"/>
    <property type="match status" value="1"/>
</dbReference>
<dbReference type="CDD" id="cd13183">
    <property type="entry name" value="FERM_C_FRMPD1_FRMPD3_FRMPD4"/>
    <property type="match status" value="1"/>
</dbReference>
<dbReference type="CDD" id="cd17170">
    <property type="entry name" value="FERM_F1_FRMPD4"/>
    <property type="match status" value="1"/>
</dbReference>
<dbReference type="CDD" id="cd21943">
    <property type="entry name" value="LGNbd_FRMPD4"/>
    <property type="match status" value="1"/>
</dbReference>
<dbReference type="CDD" id="cd06769">
    <property type="entry name" value="PDZ_FRMPD1_3_4-like"/>
    <property type="match status" value="1"/>
</dbReference>
<dbReference type="CDD" id="cd00201">
    <property type="entry name" value="WW"/>
    <property type="match status" value="1"/>
</dbReference>
<dbReference type="FunFam" id="1.20.80.10:FF:000009">
    <property type="entry name" value="FERM and PDZ domain containing 4"/>
    <property type="match status" value="1"/>
</dbReference>
<dbReference type="FunFam" id="2.30.29.30:FF:000066">
    <property type="entry name" value="FERM and PDZ domain-containing protein 4"/>
    <property type="match status" value="1"/>
</dbReference>
<dbReference type="FunFam" id="2.30.42.10:FF:000053">
    <property type="entry name" value="FERM and PDZ domain-containing protein 4"/>
    <property type="match status" value="1"/>
</dbReference>
<dbReference type="Gene3D" id="1.20.80.10">
    <property type="match status" value="1"/>
</dbReference>
<dbReference type="Gene3D" id="2.20.70.10">
    <property type="match status" value="1"/>
</dbReference>
<dbReference type="Gene3D" id="2.30.42.10">
    <property type="match status" value="1"/>
</dbReference>
<dbReference type="Gene3D" id="3.10.20.90">
    <property type="entry name" value="Phosphatidylinositol 3-kinase Catalytic Subunit, Chain A, domain 1"/>
    <property type="match status" value="1"/>
</dbReference>
<dbReference type="Gene3D" id="2.30.29.30">
    <property type="entry name" value="Pleckstrin-homology domain (PH domain)/Phosphotyrosine-binding domain (PTB)"/>
    <property type="match status" value="1"/>
</dbReference>
<dbReference type="InterPro" id="IPR019749">
    <property type="entry name" value="Band_41_domain"/>
</dbReference>
<dbReference type="InterPro" id="IPR049385">
    <property type="entry name" value="FAK1-like_FERM_C"/>
</dbReference>
<dbReference type="InterPro" id="IPR014352">
    <property type="entry name" value="FERM/acyl-CoA-bd_prot_sf"/>
</dbReference>
<dbReference type="InterPro" id="IPR035963">
    <property type="entry name" value="FERM_2"/>
</dbReference>
<dbReference type="InterPro" id="IPR019748">
    <property type="entry name" value="FERM_central"/>
</dbReference>
<dbReference type="InterPro" id="IPR000299">
    <property type="entry name" value="FERM_domain"/>
</dbReference>
<dbReference type="InterPro" id="IPR041779">
    <property type="entry name" value="FRMPD1/3/4_FERM_C"/>
</dbReference>
<dbReference type="InterPro" id="IPR001478">
    <property type="entry name" value="PDZ"/>
</dbReference>
<dbReference type="InterPro" id="IPR036034">
    <property type="entry name" value="PDZ_sf"/>
</dbReference>
<dbReference type="InterPro" id="IPR011993">
    <property type="entry name" value="PH-like_dom_sf"/>
</dbReference>
<dbReference type="InterPro" id="IPR029071">
    <property type="entry name" value="Ubiquitin-like_domsf"/>
</dbReference>
<dbReference type="InterPro" id="IPR001202">
    <property type="entry name" value="WW_dom"/>
</dbReference>
<dbReference type="InterPro" id="IPR036020">
    <property type="entry name" value="WW_dom_sf"/>
</dbReference>
<dbReference type="PANTHER" id="PTHR46221:SF4">
    <property type="entry name" value="FERM AND PDZ DOMAIN-CONTAINING PROTEIN 4"/>
    <property type="match status" value="1"/>
</dbReference>
<dbReference type="PANTHER" id="PTHR46221">
    <property type="entry name" value="FERM AND PDZ DOMAIN-CONTAINING PROTEIN FAMILY MEMBER"/>
    <property type="match status" value="1"/>
</dbReference>
<dbReference type="Pfam" id="PF21477">
    <property type="entry name" value="FERM_C_FAK1"/>
    <property type="match status" value="1"/>
</dbReference>
<dbReference type="Pfam" id="PF00373">
    <property type="entry name" value="FERM_M"/>
    <property type="match status" value="1"/>
</dbReference>
<dbReference type="Pfam" id="PF00595">
    <property type="entry name" value="PDZ"/>
    <property type="match status" value="1"/>
</dbReference>
<dbReference type="SMART" id="SM00295">
    <property type="entry name" value="B41"/>
    <property type="match status" value="1"/>
</dbReference>
<dbReference type="SMART" id="SM00228">
    <property type="entry name" value="PDZ"/>
    <property type="match status" value="1"/>
</dbReference>
<dbReference type="SUPFAM" id="SSF50156">
    <property type="entry name" value="PDZ domain-like"/>
    <property type="match status" value="1"/>
</dbReference>
<dbReference type="SUPFAM" id="SSF50729">
    <property type="entry name" value="PH domain-like"/>
    <property type="match status" value="1"/>
</dbReference>
<dbReference type="SUPFAM" id="SSF47031">
    <property type="entry name" value="Second domain of FERM"/>
    <property type="match status" value="1"/>
</dbReference>
<dbReference type="SUPFAM" id="SSF54236">
    <property type="entry name" value="Ubiquitin-like"/>
    <property type="match status" value="1"/>
</dbReference>
<dbReference type="SUPFAM" id="SSF51045">
    <property type="entry name" value="WW domain"/>
    <property type="match status" value="1"/>
</dbReference>
<dbReference type="PROSITE" id="PS50057">
    <property type="entry name" value="FERM_3"/>
    <property type="match status" value="1"/>
</dbReference>
<dbReference type="PROSITE" id="PS50106">
    <property type="entry name" value="PDZ"/>
    <property type="match status" value="1"/>
</dbReference>
<dbReference type="PROSITE" id="PS50020">
    <property type="entry name" value="WW_DOMAIN_2"/>
    <property type="match status" value="1"/>
</dbReference>
<sequence>MDVFSFVKIPKLSSHRTKSSGWPPPSGTWGLNQVPPYGWEMMTNRDGRDYFINHMTQAIPFDDPRFDSCQIIPPAPRKVEMRRDPVLGFGFVAGSEKPVVVRSVTPGGPSEGKLIPGDQIVMINDEAVSAAPRERVIDLVRSCKESILLTVIQPYPSPKSAFISAAKKARLKSNPVKVRFSEEVIINGQVSETVKDNSLLFMPNVLKVYLENGQTKSFRFDCSTSIKDVILTLQEKLSIKGIEHFSLMLEQRIEGAGTKLLLLHEQETLTQVTQRPSSHKMRCLFRISFVPKDPIDLLRRDPVAFEYLYVQSCNDVVQERFGPELKYDIALRLAALQMYIATVTTKQTQKISLKYIEKEWGLETFLPSAVLQSMKEKNIKKALSHLVKANQNLVPPGKKLSALQAKVHYLKFLSDLRLYGGRVFKATLVQAEKRSEVTLLVGPRYGISHVINTKTNLVALLADFSHVNRIEMFTEEESLVRVELHVLDVKPITLLMESSDAMNLACLTAGYYRLLVDSRRSIFNMANKKNAGTQDTGSENKGKHNLLGPDWNCMPQMTTFIGEGEQEAQITYIDSKQKTVEMTDSTLCPKEHRHLYIDNSYSSDELNQPLTQPGDAPCEADYRSLAQRSLLTLSGPDTLKKAQESPRGAKVSFIFGDLALDDGMSPPTIGYERMLEENPEMLEKQRNLYISSANDMKNLDLTPDTDSIQFVANSVYANIGDVKNFEAPEGIEEPLLHDICYAENTDDAEDEDEVSCEEDLVVGEMNQPAILDLSGSSDDIIDLTTLPPPEGDDNEDDFLLRSLNMAIAAPPPGFRDSSDEEDTQSQATSFHEDKEQGSSLQNEEIPVSLIDAVPTSAEGKCEKGLDPAVVSTLEALEALSEEQQKSENSGVAILRAYSPESSSDSGNETNSSEMTEGSELAAAQKQSESLSRMFLATHEGYHPLAEEQTEFPTSKAPSVGLPPKSSHGLAARPATDLPPKVVPSKQILHSDHMEMEPETMETKSVTDYFSKLHMGSVAYSCTSKRKSKLPEGEGKSPLSGNIPGKKQQGTKIAEIEEDTKGKAGTVSSRDNPHLSTFNLERTAFRKDSQRWYVASDGGVVEKSGMEAPAMKVFPRGPGLGNREAEGKEDGTVEGGADDASVLGQGDRFLTDMACVASAKDLDNPEDTDSPSCDHATKLSEAEDNVARLCDYHLAKRMSSLQSEGHFSLQSSQGSSVDTGCGPGSSSSACATPVESPLCPSMGKHMIPDASGKGGRYISPEERAPGHPNHGATFEELHPQTEGMCPRMTVPALHTAINADPLFGTLRDGCHRLPKIKETTV</sequence>
<keyword id="KW-0025">Alternative splicing</keyword>
<keyword id="KW-0966">Cell projection</keyword>
<keyword id="KW-0446">Lipid-binding</keyword>
<keyword id="KW-1185">Reference proteome</keyword>
<keyword id="KW-0770">Synapse</keyword>
<reference key="1">
    <citation type="journal article" date="2005" name="Science">
        <title>The transcriptional landscape of the mammalian genome.</title>
        <authorList>
            <person name="Carninci P."/>
            <person name="Kasukawa T."/>
            <person name="Katayama S."/>
            <person name="Gough J."/>
            <person name="Frith M.C."/>
            <person name="Maeda N."/>
            <person name="Oyama R."/>
            <person name="Ravasi T."/>
            <person name="Lenhard B."/>
            <person name="Wells C."/>
            <person name="Kodzius R."/>
            <person name="Shimokawa K."/>
            <person name="Bajic V.B."/>
            <person name="Brenner S.E."/>
            <person name="Batalov S."/>
            <person name="Forrest A.R."/>
            <person name="Zavolan M."/>
            <person name="Davis M.J."/>
            <person name="Wilming L.G."/>
            <person name="Aidinis V."/>
            <person name="Allen J.E."/>
            <person name="Ambesi-Impiombato A."/>
            <person name="Apweiler R."/>
            <person name="Aturaliya R.N."/>
            <person name="Bailey T.L."/>
            <person name="Bansal M."/>
            <person name="Baxter L."/>
            <person name="Beisel K.W."/>
            <person name="Bersano T."/>
            <person name="Bono H."/>
            <person name="Chalk A.M."/>
            <person name="Chiu K.P."/>
            <person name="Choudhary V."/>
            <person name="Christoffels A."/>
            <person name="Clutterbuck D.R."/>
            <person name="Crowe M.L."/>
            <person name="Dalla E."/>
            <person name="Dalrymple B.P."/>
            <person name="de Bono B."/>
            <person name="Della Gatta G."/>
            <person name="di Bernardo D."/>
            <person name="Down T."/>
            <person name="Engstrom P."/>
            <person name="Fagiolini M."/>
            <person name="Faulkner G."/>
            <person name="Fletcher C.F."/>
            <person name="Fukushima T."/>
            <person name="Furuno M."/>
            <person name="Futaki S."/>
            <person name="Gariboldi M."/>
            <person name="Georgii-Hemming P."/>
            <person name="Gingeras T.R."/>
            <person name="Gojobori T."/>
            <person name="Green R.E."/>
            <person name="Gustincich S."/>
            <person name="Harbers M."/>
            <person name="Hayashi Y."/>
            <person name="Hensch T.K."/>
            <person name="Hirokawa N."/>
            <person name="Hill D."/>
            <person name="Huminiecki L."/>
            <person name="Iacono M."/>
            <person name="Ikeo K."/>
            <person name="Iwama A."/>
            <person name="Ishikawa T."/>
            <person name="Jakt M."/>
            <person name="Kanapin A."/>
            <person name="Katoh M."/>
            <person name="Kawasawa Y."/>
            <person name="Kelso J."/>
            <person name="Kitamura H."/>
            <person name="Kitano H."/>
            <person name="Kollias G."/>
            <person name="Krishnan S.P."/>
            <person name="Kruger A."/>
            <person name="Kummerfeld S.K."/>
            <person name="Kurochkin I.V."/>
            <person name="Lareau L.F."/>
            <person name="Lazarevic D."/>
            <person name="Lipovich L."/>
            <person name="Liu J."/>
            <person name="Liuni S."/>
            <person name="McWilliam S."/>
            <person name="Madan Babu M."/>
            <person name="Madera M."/>
            <person name="Marchionni L."/>
            <person name="Matsuda H."/>
            <person name="Matsuzawa S."/>
            <person name="Miki H."/>
            <person name="Mignone F."/>
            <person name="Miyake S."/>
            <person name="Morris K."/>
            <person name="Mottagui-Tabar S."/>
            <person name="Mulder N."/>
            <person name="Nakano N."/>
            <person name="Nakauchi H."/>
            <person name="Ng P."/>
            <person name="Nilsson R."/>
            <person name="Nishiguchi S."/>
            <person name="Nishikawa S."/>
            <person name="Nori F."/>
            <person name="Ohara O."/>
            <person name="Okazaki Y."/>
            <person name="Orlando V."/>
            <person name="Pang K.C."/>
            <person name="Pavan W.J."/>
            <person name="Pavesi G."/>
            <person name="Pesole G."/>
            <person name="Petrovsky N."/>
            <person name="Piazza S."/>
            <person name="Reed J."/>
            <person name="Reid J.F."/>
            <person name="Ring B.Z."/>
            <person name="Ringwald M."/>
            <person name="Rost B."/>
            <person name="Ruan Y."/>
            <person name="Salzberg S.L."/>
            <person name="Sandelin A."/>
            <person name="Schneider C."/>
            <person name="Schoenbach C."/>
            <person name="Sekiguchi K."/>
            <person name="Semple C.A."/>
            <person name="Seno S."/>
            <person name="Sessa L."/>
            <person name="Sheng Y."/>
            <person name="Shibata Y."/>
            <person name="Shimada H."/>
            <person name="Shimada K."/>
            <person name="Silva D."/>
            <person name="Sinclair B."/>
            <person name="Sperling S."/>
            <person name="Stupka E."/>
            <person name="Sugiura K."/>
            <person name="Sultana R."/>
            <person name="Takenaka Y."/>
            <person name="Taki K."/>
            <person name="Tammoja K."/>
            <person name="Tan S.L."/>
            <person name="Tang S."/>
            <person name="Taylor M.S."/>
            <person name="Tegner J."/>
            <person name="Teichmann S.A."/>
            <person name="Ueda H.R."/>
            <person name="van Nimwegen E."/>
            <person name="Verardo R."/>
            <person name="Wei C.L."/>
            <person name="Yagi K."/>
            <person name="Yamanishi H."/>
            <person name="Zabarovsky E."/>
            <person name="Zhu S."/>
            <person name="Zimmer A."/>
            <person name="Hide W."/>
            <person name="Bult C."/>
            <person name="Grimmond S.M."/>
            <person name="Teasdale R.D."/>
            <person name="Liu E.T."/>
            <person name="Brusic V."/>
            <person name="Quackenbush J."/>
            <person name="Wahlestedt C."/>
            <person name="Mattick J.S."/>
            <person name="Hume D.A."/>
            <person name="Kai C."/>
            <person name="Sasaki D."/>
            <person name="Tomaru Y."/>
            <person name="Fukuda S."/>
            <person name="Kanamori-Katayama M."/>
            <person name="Suzuki M."/>
            <person name="Aoki J."/>
            <person name="Arakawa T."/>
            <person name="Iida J."/>
            <person name="Imamura K."/>
            <person name="Itoh M."/>
            <person name="Kato T."/>
            <person name="Kawaji H."/>
            <person name="Kawagashira N."/>
            <person name="Kawashima T."/>
            <person name="Kojima M."/>
            <person name="Kondo S."/>
            <person name="Konno H."/>
            <person name="Nakano K."/>
            <person name="Ninomiya N."/>
            <person name="Nishio T."/>
            <person name="Okada M."/>
            <person name="Plessy C."/>
            <person name="Shibata K."/>
            <person name="Shiraki T."/>
            <person name="Suzuki S."/>
            <person name="Tagami M."/>
            <person name="Waki K."/>
            <person name="Watahiki A."/>
            <person name="Okamura-Oho Y."/>
            <person name="Suzuki H."/>
            <person name="Kawai J."/>
            <person name="Hayashizaki Y."/>
        </authorList>
    </citation>
    <scope>NUCLEOTIDE SEQUENCE [LARGE SCALE MRNA] (ISOFORMS 2 AND 3)</scope>
    <source>
        <strain>C57BL/6J</strain>
        <tissue>Brain</tissue>
    </source>
</reference>
<reference key="2">
    <citation type="journal article" date="2009" name="PLoS Biol.">
        <title>Lineage-specific biology revealed by a finished genome assembly of the mouse.</title>
        <authorList>
            <person name="Church D.M."/>
            <person name="Goodstadt L."/>
            <person name="Hillier L.W."/>
            <person name="Zody M.C."/>
            <person name="Goldstein S."/>
            <person name="She X."/>
            <person name="Bult C.J."/>
            <person name="Agarwala R."/>
            <person name="Cherry J.L."/>
            <person name="DiCuccio M."/>
            <person name="Hlavina W."/>
            <person name="Kapustin Y."/>
            <person name="Meric P."/>
            <person name="Maglott D."/>
            <person name="Birtle Z."/>
            <person name="Marques A.C."/>
            <person name="Graves T."/>
            <person name="Zhou S."/>
            <person name="Teague B."/>
            <person name="Potamousis K."/>
            <person name="Churas C."/>
            <person name="Place M."/>
            <person name="Herschleb J."/>
            <person name="Runnheim R."/>
            <person name="Forrest D."/>
            <person name="Amos-Landgraf J."/>
            <person name="Schwartz D.C."/>
            <person name="Cheng Z."/>
            <person name="Lindblad-Toh K."/>
            <person name="Eichler E.E."/>
            <person name="Ponting C.P."/>
        </authorList>
    </citation>
    <scope>NUCLEOTIDE SEQUENCE [LARGE SCALE GENOMIC DNA]</scope>
    <source>
        <strain>C57BL/6J</strain>
    </source>
</reference>
<reference key="3">
    <citation type="journal article" date="2004" name="Genome Res.">
        <title>The status, quality, and expansion of the NIH full-length cDNA project: the Mammalian Gene Collection (MGC).</title>
        <authorList>
            <consortium name="The MGC Project Team"/>
        </authorList>
    </citation>
    <scope>NUCLEOTIDE SEQUENCE [LARGE SCALE MRNA] (ISOFORM 3)</scope>
    <source>
        <tissue>Brain</tissue>
    </source>
</reference>
<reference key="4">
    <citation type="journal article" date="2003" name="DNA Res.">
        <title>Prediction of the coding sequences of mouse homologues of KIAA gene: II. The complete nucleotide sequences of 400 mouse KIAA-homologous cDNAs identified by screening of terminal sequences of cDNA clones randomly sampled from size-fractionated libraries.</title>
        <authorList>
            <person name="Okazaki N."/>
            <person name="Kikuno R."/>
            <person name="Ohara R."/>
            <person name="Inamoto S."/>
            <person name="Aizawa H."/>
            <person name="Yuasa S."/>
            <person name="Nakajima D."/>
            <person name="Nagase T."/>
            <person name="Ohara O."/>
            <person name="Koga H."/>
        </authorList>
    </citation>
    <scope>NUCLEOTIDE SEQUENCE [LARGE SCALE MRNA] OF 523-1320</scope>
    <source>
        <tissue>Brain</tissue>
    </source>
</reference>
<reference key="5">
    <citation type="journal article" date="2008" name="J. Neurosci.">
        <title>Preso, a novel PSD-95-interacting FERM and PDZ domain protein that regulates dendritic spine morphogenesis.</title>
        <authorList>
            <person name="Lee H.W."/>
            <person name="Choi J."/>
            <person name="Shin H."/>
            <person name="Kim K."/>
            <person name="Yang J."/>
            <person name="Na M."/>
            <person name="Choi S.Y."/>
            <person name="Kang G.B."/>
            <person name="Eom S.H."/>
            <person name="Kim H."/>
            <person name="Kim E."/>
        </authorList>
    </citation>
    <scope>TISSUE SPECIFICITY</scope>
</reference>
<reference key="6">
    <citation type="journal article" date="2010" name="Cell">
        <title>A tissue-specific atlas of mouse protein phosphorylation and expression.</title>
        <authorList>
            <person name="Huttlin E.L."/>
            <person name="Jedrychowski M.P."/>
            <person name="Elias J.E."/>
            <person name="Goswami T."/>
            <person name="Rad R."/>
            <person name="Beausoleil S.A."/>
            <person name="Villen J."/>
            <person name="Haas W."/>
            <person name="Sowa M.E."/>
            <person name="Gygi S.P."/>
        </authorList>
    </citation>
    <scope>IDENTIFICATION BY MASS SPECTROMETRY [LARGE SCALE ANALYSIS]</scope>
    <source>
        <tissue>Brain</tissue>
    </source>
</reference>